<name>EFTS_SYMTH</name>
<reference key="1">
    <citation type="journal article" date="2004" name="Nucleic Acids Res.">
        <title>Genome sequence of Symbiobacterium thermophilum, an uncultivable bacterium that depends on microbial commensalism.</title>
        <authorList>
            <person name="Ueda K."/>
            <person name="Yamashita A."/>
            <person name="Ishikawa J."/>
            <person name="Shimada M."/>
            <person name="Watsuji T."/>
            <person name="Morimura K."/>
            <person name="Ikeda H."/>
            <person name="Hattori M."/>
            <person name="Beppu T."/>
        </authorList>
    </citation>
    <scope>NUCLEOTIDE SEQUENCE [LARGE SCALE GENOMIC DNA]</scope>
    <source>
        <strain>DSM 24528 / JCM 14929 / IAM 14863 / T</strain>
    </source>
</reference>
<gene>
    <name evidence="1" type="primary">tsf</name>
    <name type="ordered locus">STH1492</name>
</gene>
<organism>
    <name type="scientific">Symbiobacterium thermophilum (strain DSM 24528 / JCM 14929 / IAM 14863 / T)</name>
    <dbReference type="NCBI Taxonomy" id="292459"/>
    <lineage>
        <taxon>Bacteria</taxon>
        <taxon>Bacillati</taxon>
        <taxon>Bacillota</taxon>
        <taxon>Clostridia</taxon>
        <taxon>Eubacteriales</taxon>
        <taxon>Symbiobacteriaceae</taxon>
        <taxon>Symbiobacterium</taxon>
    </lineage>
</organism>
<proteinExistence type="inferred from homology"/>
<keyword id="KW-0963">Cytoplasm</keyword>
<keyword id="KW-0251">Elongation factor</keyword>
<keyword id="KW-0648">Protein biosynthesis</keyword>
<keyword id="KW-1185">Reference proteome</keyword>
<comment type="function">
    <text evidence="1">Associates with the EF-Tu.GDP complex and induces the exchange of GDP to GTP. It remains bound to the aminoacyl-tRNA.EF-Tu.GTP complex up to the GTP hydrolysis stage on the ribosome.</text>
</comment>
<comment type="subcellular location">
    <subcellularLocation>
        <location evidence="1">Cytoplasm</location>
    </subcellularLocation>
</comment>
<comment type="similarity">
    <text evidence="1">Belongs to the EF-Ts family.</text>
</comment>
<feature type="chain" id="PRO_0000161215" description="Elongation factor Ts">
    <location>
        <begin position="1"/>
        <end position="304"/>
    </location>
</feature>
<feature type="region of interest" description="Involved in Mg(2+) ion dislocation from EF-Tu" evidence="1">
    <location>
        <begin position="82"/>
        <end position="85"/>
    </location>
</feature>
<protein>
    <recommendedName>
        <fullName evidence="1">Elongation factor Ts</fullName>
        <shortName evidence="1">EF-Ts</shortName>
    </recommendedName>
</protein>
<accession>Q67PB6</accession>
<evidence type="ECO:0000255" key="1">
    <source>
        <dbReference type="HAMAP-Rule" id="MF_00050"/>
    </source>
</evidence>
<dbReference type="EMBL" id="AP006840">
    <property type="protein sequence ID" value="BAD40477.1"/>
    <property type="molecule type" value="Genomic_DNA"/>
</dbReference>
<dbReference type="RefSeq" id="WP_011195622.1">
    <property type="nucleotide sequence ID" value="NC_006177.1"/>
</dbReference>
<dbReference type="SMR" id="Q67PB6"/>
<dbReference type="STRING" id="292459.STH1492"/>
<dbReference type="KEGG" id="sth:STH1492"/>
<dbReference type="eggNOG" id="COG0264">
    <property type="taxonomic scope" value="Bacteria"/>
</dbReference>
<dbReference type="HOGENOM" id="CLU_047155_0_2_9"/>
<dbReference type="OrthoDB" id="9808348at2"/>
<dbReference type="Proteomes" id="UP000000417">
    <property type="component" value="Chromosome"/>
</dbReference>
<dbReference type="GO" id="GO:0005737">
    <property type="term" value="C:cytoplasm"/>
    <property type="evidence" value="ECO:0007669"/>
    <property type="project" value="UniProtKB-SubCell"/>
</dbReference>
<dbReference type="GO" id="GO:0003746">
    <property type="term" value="F:translation elongation factor activity"/>
    <property type="evidence" value="ECO:0007669"/>
    <property type="project" value="UniProtKB-UniRule"/>
</dbReference>
<dbReference type="CDD" id="cd14275">
    <property type="entry name" value="UBA_EF-Ts"/>
    <property type="match status" value="1"/>
</dbReference>
<dbReference type="FunFam" id="1.10.286.20:FF:000001">
    <property type="entry name" value="Elongation factor Ts"/>
    <property type="match status" value="1"/>
</dbReference>
<dbReference type="FunFam" id="1.10.8.10:FF:000001">
    <property type="entry name" value="Elongation factor Ts"/>
    <property type="match status" value="1"/>
</dbReference>
<dbReference type="Gene3D" id="1.10.286.20">
    <property type="match status" value="1"/>
</dbReference>
<dbReference type="Gene3D" id="1.10.8.10">
    <property type="entry name" value="DNA helicase RuvA subunit, C-terminal domain"/>
    <property type="match status" value="1"/>
</dbReference>
<dbReference type="Gene3D" id="3.30.479.20">
    <property type="entry name" value="Elongation factor Ts, dimerisation domain"/>
    <property type="match status" value="2"/>
</dbReference>
<dbReference type="HAMAP" id="MF_00050">
    <property type="entry name" value="EF_Ts"/>
    <property type="match status" value="1"/>
</dbReference>
<dbReference type="InterPro" id="IPR036402">
    <property type="entry name" value="EF-Ts_dimer_sf"/>
</dbReference>
<dbReference type="InterPro" id="IPR001816">
    <property type="entry name" value="Transl_elong_EFTs/EF1B"/>
</dbReference>
<dbReference type="InterPro" id="IPR014039">
    <property type="entry name" value="Transl_elong_EFTs/EF1B_dimer"/>
</dbReference>
<dbReference type="InterPro" id="IPR018101">
    <property type="entry name" value="Transl_elong_Ts_CS"/>
</dbReference>
<dbReference type="InterPro" id="IPR009060">
    <property type="entry name" value="UBA-like_sf"/>
</dbReference>
<dbReference type="NCBIfam" id="TIGR00116">
    <property type="entry name" value="tsf"/>
    <property type="match status" value="1"/>
</dbReference>
<dbReference type="PANTHER" id="PTHR11741">
    <property type="entry name" value="ELONGATION FACTOR TS"/>
    <property type="match status" value="1"/>
</dbReference>
<dbReference type="PANTHER" id="PTHR11741:SF0">
    <property type="entry name" value="ELONGATION FACTOR TS, MITOCHONDRIAL"/>
    <property type="match status" value="1"/>
</dbReference>
<dbReference type="Pfam" id="PF00889">
    <property type="entry name" value="EF_TS"/>
    <property type="match status" value="1"/>
</dbReference>
<dbReference type="SUPFAM" id="SSF54713">
    <property type="entry name" value="Elongation factor Ts (EF-Ts), dimerisation domain"/>
    <property type="match status" value="2"/>
</dbReference>
<dbReference type="SUPFAM" id="SSF46934">
    <property type="entry name" value="UBA-like"/>
    <property type="match status" value="1"/>
</dbReference>
<dbReference type="PROSITE" id="PS01126">
    <property type="entry name" value="EF_TS_1"/>
    <property type="match status" value="1"/>
</dbReference>
<dbReference type="PROSITE" id="PS01127">
    <property type="entry name" value="EF_TS_2"/>
    <property type="match status" value="1"/>
</dbReference>
<sequence>MAEITAKMVAELRARTGAGMMDCKKALMETGGDFDKAVDWLREKGLAAAAKKAGRVAAEGRVHAIVEDGARHGVLVEVNCETDFVARGEAFINLCDHVARVILQARPASLEALQEALGDTVKEAVAKIGENIQVRRFERYEVADAGRVHAYIHGDGRVGVLIELTTATPEVAAHPEVEALCHELALQIASMRAQYVRPEDVPAQVIEHEREILKAQAINEGKKPEIAEKMVAGRIQKFFQEVCLLEQEWVKDSKKTVGALVKEVAGKVGGEITVKRFVRYEKGEGIEKRQDDFAEEVMRQAGLK</sequence>